<reference key="1">
    <citation type="journal article" date="2007" name="J. Bacteriol.">
        <title>Two gene determinants are differentially involved in the biogenesis of Fap1 precursors in Streptococcus parasanguis.</title>
        <authorList>
            <person name="Wu H."/>
            <person name="Bu S."/>
            <person name="Newell P."/>
            <person name="Chen Q."/>
            <person name="Fives-Taylor P."/>
        </authorList>
    </citation>
    <scope>NUCLEOTIDE SEQUENCE [GENOMIC DNA]</scope>
    <scope>FUNCTION</scope>
    <scope>DISRUPTION PHENOTYPE</scope>
    <source>
        <strain>FW213</strain>
    </source>
</reference>
<protein>
    <recommendedName>
        <fullName>Accessory Sec system protein translocase subunit SecY2</fullName>
    </recommendedName>
</protein>
<name>SECY2_STRPA</name>
<proteinExistence type="inferred from homology"/>
<keyword id="KW-1003">Cell membrane</keyword>
<keyword id="KW-0472">Membrane</keyword>
<keyword id="KW-0653">Protein transport</keyword>
<keyword id="KW-0811">Translocation</keyword>
<keyword id="KW-0812">Transmembrane</keyword>
<keyword id="KW-1133">Transmembrane helix</keyword>
<keyword id="KW-0813">Transport</keyword>
<evidence type="ECO:0000250" key="1"/>
<evidence type="ECO:0000255" key="2"/>
<evidence type="ECO:0000269" key="3">
    <source>
    </source>
</evidence>
<evidence type="ECO:0000305" key="4"/>
<accession>A1C3L4</accession>
<comment type="function">
    <text evidence="3">Part of the accessory SecA2/SecY2 system specifically required for correct glycosylation and export of Fap1, a serine-rich fimbrial adhesin. Potentially the central subunit of a protein translocation channel.</text>
</comment>
<comment type="subunit">
    <text evidence="4">Component of the Sec protein translocase complex. Heterotrimer consisting of SecY, SecE and SecG subunits. The heterotrimers can form oligomers, although 1 heterotrimer is thought to be able to translocate proteins (Potential). Part of the accessory SecA2/SecY2 protein translocation apparatus required to export cell wall proteins.</text>
</comment>
<comment type="subcellular location">
    <subcellularLocation>
        <location evidence="1">Cell membrane</location>
        <topology evidence="1">Multi-pass membrane protein</topology>
    </subcellularLocation>
</comment>
<comment type="disruption phenotype">
    <text evidence="3">No effect on general protein secretion. Decreases the extent of glycosylation of serine-rich fimbrial adhesin Fap1, but the protein is still found on the cell surface. The partially glycosylated Fap1 is larger than the wild-type protein.</text>
</comment>
<comment type="similarity">
    <text evidence="4">Belongs to the SecY/SEC61-alpha family. SecY2 subfamily.</text>
</comment>
<organism>
    <name type="scientific">Streptococcus parasanguinis</name>
    <dbReference type="NCBI Taxonomy" id="1318"/>
    <lineage>
        <taxon>Bacteria</taxon>
        <taxon>Bacillati</taxon>
        <taxon>Bacillota</taxon>
        <taxon>Bacilli</taxon>
        <taxon>Lactobacillales</taxon>
        <taxon>Streptococcaceae</taxon>
        <taxon>Streptococcus</taxon>
    </lineage>
</organism>
<dbReference type="EMBL" id="DQ990875">
    <property type="protein sequence ID" value="ABL73999.1"/>
    <property type="molecule type" value="Genomic_DNA"/>
</dbReference>
<dbReference type="RefSeq" id="WP_041826480.1">
    <property type="nucleotide sequence ID" value="NZ_JYPA01000019.1"/>
</dbReference>
<dbReference type="SMR" id="A1C3L4"/>
<dbReference type="GO" id="GO:0005886">
    <property type="term" value="C:plasma membrane"/>
    <property type="evidence" value="ECO:0007669"/>
    <property type="project" value="UniProtKB-SubCell"/>
</dbReference>
<dbReference type="GO" id="GO:0065002">
    <property type="term" value="P:intracellular protein transmembrane transport"/>
    <property type="evidence" value="ECO:0007669"/>
    <property type="project" value="UniProtKB-UniRule"/>
</dbReference>
<dbReference type="GO" id="GO:0006605">
    <property type="term" value="P:protein targeting"/>
    <property type="evidence" value="ECO:0007669"/>
    <property type="project" value="UniProtKB-UniRule"/>
</dbReference>
<dbReference type="Gene3D" id="1.10.3370.10">
    <property type="entry name" value="SecY subunit domain"/>
    <property type="match status" value="1"/>
</dbReference>
<dbReference type="HAMAP" id="MF_01466">
    <property type="entry name" value="SecY2"/>
    <property type="match status" value="1"/>
</dbReference>
<dbReference type="InterPro" id="IPR002208">
    <property type="entry name" value="SecY/SEC61-alpha"/>
</dbReference>
<dbReference type="InterPro" id="IPR014269">
    <property type="entry name" value="SecY2"/>
</dbReference>
<dbReference type="InterPro" id="IPR023201">
    <property type="entry name" value="SecY_dom_sf"/>
</dbReference>
<dbReference type="NCBIfam" id="TIGR02920">
    <property type="entry name" value="acc_sec_Y2"/>
    <property type="match status" value="1"/>
</dbReference>
<dbReference type="PANTHER" id="PTHR10906">
    <property type="entry name" value="SECY/SEC61-ALPHA FAMILY MEMBER"/>
    <property type="match status" value="1"/>
</dbReference>
<dbReference type="Pfam" id="PF00344">
    <property type="entry name" value="SecY"/>
    <property type="match status" value="1"/>
</dbReference>
<dbReference type="PIRSF" id="PIRSF004557">
    <property type="entry name" value="SecY"/>
    <property type="match status" value="1"/>
</dbReference>
<dbReference type="PRINTS" id="PR00303">
    <property type="entry name" value="SECYTRNLCASE"/>
</dbReference>
<dbReference type="SUPFAM" id="SSF103491">
    <property type="entry name" value="Preprotein translocase SecY subunit"/>
    <property type="match status" value="1"/>
</dbReference>
<gene>
    <name type="primary">secY2</name>
</gene>
<feature type="chain" id="PRO_0000414877" description="Accessory Sec system protein translocase subunit SecY2">
    <location>
        <begin position="1"/>
        <end position="418"/>
    </location>
</feature>
<feature type="transmembrane region" description="Helical" evidence="2">
    <location>
        <begin position="21"/>
        <end position="41"/>
    </location>
</feature>
<feature type="transmembrane region" description="Helical" evidence="2">
    <location>
        <begin position="72"/>
        <end position="92"/>
    </location>
</feature>
<feature type="transmembrane region" description="Helical" evidence="2">
    <location>
        <begin position="112"/>
        <end position="132"/>
    </location>
</feature>
<feature type="transmembrane region" description="Helical" evidence="2">
    <location>
        <begin position="141"/>
        <end position="161"/>
    </location>
</feature>
<feature type="transmembrane region" description="Helical" evidence="2">
    <location>
        <begin position="166"/>
        <end position="186"/>
    </location>
</feature>
<feature type="transmembrane region" description="Helical" evidence="2">
    <location>
        <begin position="199"/>
        <end position="219"/>
    </location>
</feature>
<feature type="transmembrane region" description="Helical" evidence="2">
    <location>
        <begin position="256"/>
        <end position="276"/>
    </location>
</feature>
<feature type="transmembrane region" description="Helical" evidence="2">
    <location>
        <begin position="295"/>
        <end position="315"/>
    </location>
</feature>
<feature type="transmembrane region" description="Helical" evidence="2">
    <location>
        <begin position="353"/>
        <end position="373"/>
    </location>
</feature>
<feature type="transmembrane region" description="Helical" evidence="2">
    <location>
        <begin position="382"/>
        <end position="402"/>
    </location>
</feature>
<sequence>MLRKLQKYWKKSIIFQRFTWMIGIVFIYMLGRQIPIPTVGVDKVVVGNASDSQLLENFGAITGIQFSNMTLFSLGIGPTMTMMILWRFLITFKLIGSWTSNKVNRLQFLLTLAIALLQSFGITNDSKFLLIFGYSHSTLRIITIILLTTGTFILNWLCKINSERGIGGMTVVILVNMILTFQSNIIRYFSVQQFKFSSLIQYGLVFFVALSILIWFNILLYKGEYRIPIQRVGLNTPYHASSYLPIRVTPAGAMPFMYGMTLMMLPPYIFVVLLHIFPGNQILEYLSVHIGLSQLPGVICYIFLLYFLSIGFAYYNYDPYEISKNMRNNGDYISGKKPGEETIKYIQYVVNSFAQFGAFTVIIFGGLPMLAVLLQGQGKNSVSIALLISNAYIIVSLLLGVIEQVDTMNSWKKYKNLI</sequence>